<keyword id="KW-0067">ATP-binding</keyword>
<keyword id="KW-0436">Ligase</keyword>
<keyword id="KW-0547">Nucleotide-binding</keyword>
<keyword id="KW-1185">Reference proteome</keyword>
<dbReference type="EMBL" id="AE000657">
    <property type="protein sequence ID" value="AAC06920.1"/>
    <property type="molecule type" value="Genomic_DNA"/>
</dbReference>
<dbReference type="PIR" id="H70366">
    <property type="entry name" value="H70366"/>
</dbReference>
<dbReference type="RefSeq" id="NP_213524.1">
    <property type="nucleotide sequence ID" value="NC_000918.1"/>
</dbReference>
<dbReference type="RefSeq" id="WP_010880462.1">
    <property type="nucleotide sequence ID" value="NC_000918.1"/>
</dbReference>
<dbReference type="SMR" id="O66963"/>
<dbReference type="FunCoup" id="O66963">
    <property type="interactions" value="34"/>
</dbReference>
<dbReference type="STRING" id="224324.aq_763"/>
<dbReference type="EnsemblBacteria" id="AAC06920">
    <property type="protein sequence ID" value="AAC06920"/>
    <property type="gene ID" value="aq_763"/>
</dbReference>
<dbReference type="KEGG" id="aae:aq_763"/>
<dbReference type="PATRIC" id="fig|224324.8.peg.607"/>
<dbReference type="eggNOG" id="COG2269">
    <property type="taxonomic scope" value="Bacteria"/>
</dbReference>
<dbReference type="HOGENOM" id="CLU_008255_1_0_0"/>
<dbReference type="InParanoid" id="O66963"/>
<dbReference type="OrthoDB" id="9802326at2"/>
<dbReference type="Proteomes" id="UP000000798">
    <property type="component" value="Chromosome"/>
</dbReference>
<dbReference type="GO" id="GO:0005737">
    <property type="term" value="C:cytoplasm"/>
    <property type="evidence" value="ECO:0000318"/>
    <property type="project" value="GO_Central"/>
</dbReference>
<dbReference type="GO" id="GO:0005524">
    <property type="term" value="F:ATP binding"/>
    <property type="evidence" value="ECO:0007669"/>
    <property type="project" value="UniProtKB-KW"/>
</dbReference>
<dbReference type="GO" id="GO:0004824">
    <property type="term" value="F:lysine-tRNA ligase activity"/>
    <property type="evidence" value="ECO:0000318"/>
    <property type="project" value="GO_Central"/>
</dbReference>
<dbReference type="GO" id="GO:0000049">
    <property type="term" value="F:tRNA binding"/>
    <property type="evidence" value="ECO:0000318"/>
    <property type="project" value="GO_Central"/>
</dbReference>
<dbReference type="GO" id="GO:0006430">
    <property type="term" value="P:lysyl-tRNA aminoacylation"/>
    <property type="evidence" value="ECO:0000318"/>
    <property type="project" value="GO_Central"/>
</dbReference>
<dbReference type="FunFam" id="3.30.930.10:FF:000017">
    <property type="entry name" value="Elongation factor P--(R)-beta-lysine ligase"/>
    <property type="match status" value="1"/>
</dbReference>
<dbReference type="Gene3D" id="3.30.930.10">
    <property type="entry name" value="Bira Bifunctional Protein, Domain 2"/>
    <property type="match status" value="1"/>
</dbReference>
<dbReference type="InterPro" id="IPR004364">
    <property type="entry name" value="Aa-tRNA-synt_II"/>
</dbReference>
<dbReference type="InterPro" id="IPR006195">
    <property type="entry name" value="aa-tRNA-synth_II"/>
</dbReference>
<dbReference type="InterPro" id="IPR045864">
    <property type="entry name" value="aa-tRNA-synth_II/BPL/LPL"/>
</dbReference>
<dbReference type="InterPro" id="IPR004525">
    <property type="entry name" value="EpmA"/>
</dbReference>
<dbReference type="NCBIfam" id="TIGR00462">
    <property type="entry name" value="genX"/>
    <property type="match status" value="1"/>
</dbReference>
<dbReference type="NCBIfam" id="NF006828">
    <property type="entry name" value="PRK09350.1"/>
    <property type="match status" value="1"/>
</dbReference>
<dbReference type="PANTHER" id="PTHR42918:SF6">
    <property type="entry name" value="ELONGATION FACTOR P--(R)-BETA-LYSINE LIGASE"/>
    <property type="match status" value="1"/>
</dbReference>
<dbReference type="PANTHER" id="PTHR42918">
    <property type="entry name" value="LYSYL-TRNA SYNTHETASE"/>
    <property type="match status" value="1"/>
</dbReference>
<dbReference type="Pfam" id="PF00152">
    <property type="entry name" value="tRNA-synt_2"/>
    <property type="match status" value="1"/>
</dbReference>
<dbReference type="SUPFAM" id="SSF55681">
    <property type="entry name" value="Class II aaRS and biotin synthetases"/>
    <property type="match status" value="1"/>
</dbReference>
<dbReference type="PROSITE" id="PS50862">
    <property type="entry name" value="AA_TRNA_LIGASE_II"/>
    <property type="match status" value="1"/>
</dbReference>
<sequence length="293" mass="35013">MDLLDAWDYFINEVRKFFKEKGYTEVSTPLLLDFPNLDSNVEPVKVEVLERGENKVKWLHTSPEYSMKKLLSRYKRDIFQITKVFRNNEWGRLHRIEFHMLEWYAVGCDYLYLIEELKQLLNKLFGFKEFEVITVEEAFKRHFGEGIPQEESSMKELLERKGIDFSEDEDWETLFYRAFIEVERHLGFNRPTFLINFPERLCALAKVRNGYAERFELFIKGIELANGWTEETNPEEVRKRLEREAKKRNLPLDEDFIKAHEDMPECAGCSLGIDRLFSLFLGKEELVSEFFRA</sequence>
<feature type="chain" id="PRO_0000152715" description="Elongation factor P--(R)-beta-lysine ligase homolog">
    <location>
        <begin position="1"/>
        <end position="293"/>
    </location>
</feature>
<feature type="binding site" evidence="1">
    <location>
        <begin position="86"/>
        <end position="88"/>
    </location>
    <ligand>
        <name>ATP</name>
        <dbReference type="ChEBI" id="CHEBI:30616"/>
    </ligand>
</feature>
<feature type="binding site" evidence="1">
    <location>
        <begin position="223"/>
        <end position="224"/>
    </location>
    <ligand>
        <name>ATP</name>
        <dbReference type="ChEBI" id="CHEBI:30616"/>
    </ligand>
</feature>
<feature type="binding site" evidence="1">
    <location>
        <position position="272"/>
    </location>
    <ligand>
        <name>ATP</name>
        <dbReference type="ChEBI" id="CHEBI:30616"/>
    </ligand>
</feature>
<comment type="subunit">
    <text evidence="1">Homodimer.</text>
</comment>
<comment type="similarity">
    <text evidence="2">Belongs to the class-II aminoacyl-tRNA synthetase family. EpmA subfamily.</text>
</comment>
<evidence type="ECO:0000250" key="1"/>
<evidence type="ECO:0000305" key="2"/>
<name>EPMAH_AQUAE</name>
<proteinExistence type="inferred from homology"/>
<reference key="1">
    <citation type="journal article" date="1998" name="Nature">
        <title>The complete genome of the hyperthermophilic bacterium Aquifex aeolicus.</title>
        <authorList>
            <person name="Deckert G."/>
            <person name="Warren P.V."/>
            <person name="Gaasterland T."/>
            <person name="Young W.G."/>
            <person name="Lenox A.L."/>
            <person name="Graham D.E."/>
            <person name="Overbeek R."/>
            <person name="Snead M.A."/>
            <person name="Keller M."/>
            <person name="Aujay M."/>
            <person name="Huber R."/>
            <person name="Feldman R.A."/>
            <person name="Short J.M."/>
            <person name="Olsen G.J."/>
            <person name="Swanson R.V."/>
        </authorList>
    </citation>
    <scope>NUCLEOTIDE SEQUENCE [LARGE SCALE GENOMIC DNA]</scope>
    <source>
        <strain>VF5</strain>
    </source>
</reference>
<accession>O66963</accession>
<organism>
    <name type="scientific">Aquifex aeolicus (strain VF5)</name>
    <dbReference type="NCBI Taxonomy" id="224324"/>
    <lineage>
        <taxon>Bacteria</taxon>
        <taxon>Pseudomonadati</taxon>
        <taxon>Aquificota</taxon>
        <taxon>Aquificia</taxon>
        <taxon>Aquificales</taxon>
        <taxon>Aquificaceae</taxon>
        <taxon>Aquifex</taxon>
    </lineage>
</organism>
<protein>
    <recommendedName>
        <fullName>Elongation factor P--(R)-beta-lysine ligase homolog</fullName>
        <shortName>EF-P--(R)-beta-lysine ligase homolog</shortName>
    </recommendedName>
</protein>
<gene>
    <name type="primary">genX</name>
    <name type="ordered locus">aq_763</name>
</gene>